<keyword id="KW-0687">Ribonucleoprotein</keyword>
<keyword id="KW-0689">Ribosomal protein</keyword>
<evidence type="ECO:0000255" key="1">
    <source>
        <dbReference type="HAMAP-Rule" id="MF_00358"/>
    </source>
</evidence>
<evidence type="ECO:0000256" key="2">
    <source>
        <dbReference type="SAM" id="MobiDB-lite"/>
    </source>
</evidence>
<evidence type="ECO:0000305" key="3"/>
<gene>
    <name evidence="1" type="primary">rpsU</name>
    <name type="ordered locus">VC0395_A0047</name>
    <name type="ordered locus">VC395_0537</name>
</gene>
<comment type="similarity">
    <text evidence="1">Belongs to the bacterial ribosomal protein bS21 family.</text>
</comment>
<sequence length="71" mass="8487">MPVVKVRENEPFDVALRRFKRSCEKAGILSEVRRREHYEKPTTVRKRAKAAAQKRHAKKLARENARRVRLY</sequence>
<protein>
    <recommendedName>
        <fullName evidence="1">Small ribosomal subunit protein bS21</fullName>
    </recommendedName>
    <alternativeName>
        <fullName evidence="3">30S ribosomal protein S21</fullName>
    </alternativeName>
</protein>
<name>RS21_VIBC3</name>
<feature type="chain" id="PRO_1000072082" description="Small ribosomal subunit protein bS21">
    <location>
        <begin position="1"/>
        <end position="71"/>
    </location>
</feature>
<feature type="region of interest" description="Disordered" evidence="2">
    <location>
        <begin position="39"/>
        <end position="71"/>
    </location>
</feature>
<feature type="compositionally biased region" description="Basic residues" evidence="2">
    <location>
        <begin position="43"/>
        <end position="59"/>
    </location>
</feature>
<feature type="compositionally biased region" description="Basic and acidic residues" evidence="2">
    <location>
        <begin position="60"/>
        <end position="71"/>
    </location>
</feature>
<organism>
    <name type="scientific">Vibrio cholerae serotype O1 (strain ATCC 39541 / Classical Ogawa 395 / O395)</name>
    <dbReference type="NCBI Taxonomy" id="345073"/>
    <lineage>
        <taxon>Bacteria</taxon>
        <taxon>Pseudomonadati</taxon>
        <taxon>Pseudomonadota</taxon>
        <taxon>Gammaproteobacteria</taxon>
        <taxon>Vibrionales</taxon>
        <taxon>Vibrionaceae</taxon>
        <taxon>Vibrio</taxon>
    </lineage>
</organism>
<dbReference type="EMBL" id="CP000627">
    <property type="protein sequence ID" value="ABQ20623.1"/>
    <property type="molecule type" value="Genomic_DNA"/>
</dbReference>
<dbReference type="EMBL" id="CP001235">
    <property type="protein sequence ID" value="ACP08556.1"/>
    <property type="molecule type" value="Genomic_DNA"/>
</dbReference>
<dbReference type="RefSeq" id="WP_001145625.1">
    <property type="nucleotide sequence ID" value="NZ_JAACZH010000029.1"/>
</dbReference>
<dbReference type="SMR" id="A5F9E6"/>
<dbReference type="GeneID" id="97540092"/>
<dbReference type="KEGG" id="vco:VC0395_A0047"/>
<dbReference type="KEGG" id="vcr:VC395_0537"/>
<dbReference type="PATRIC" id="fig|345073.21.peg.526"/>
<dbReference type="eggNOG" id="COG0828">
    <property type="taxonomic scope" value="Bacteria"/>
</dbReference>
<dbReference type="HOGENOM" id="CLU_159258_1_0_6"/>
<dbReference type="OrthoDB" id="9799244at2"/>
<dbReference type="Proteomes" id="UP000000249">
    <property type="component" value="Chromosome 2"/>
</dbReference>
<dbReference type="GO" id="GO:1990904">
    <property type="term" value="C:ribonucleoprotein complex"/>
    <property type="evidence" value="ECO:0007669"/>
    <property type="project" value="UniProtKB-KW"/>
</dbReference>
<dbReference type="GO" id="GO:0005840">
    <property type="term" value="C:ribosome"/>
    <property type="evidence" value="ECO:0007669"/>
    <property type="project" value="UniProtKB-KW"/>
</dbReference>
<dbReference type="GO" id="GO:0003735">
    <property type="term" value="F:structural constituent of ribosome"/>
    <property type="evidence" value="ECO:0007669"/>
    <property type="project" value="InterPro"/>
</dbReference>
<dbReference type="GO" id="GO:0006412">
    <property type="term" value="P:translation"/>
    <property type="evidence" value="ECO:0007669"/>
    <property type="project" value="UniProtKB-UniRule"/>
</dbReference>
<dbReference type="FunFam" id="1.20.5.1150:FF:000001">
    <property type="entry name" value="30S ribosomal protein S21"/>
    <property type="match status" value="1"/>
</dbReference>
<dbReference type="Gene3D" id="1.20.5.1150">
    <property type="entry name" value="Ribosomal protein S8"/>
    <property type="match status" value="1"/>
</dbReference>
<dbReference type="HAMAP" id="MF_00358">
    <property type="entry name" value="Ribosomal_bS21"/>
    <property type="match status" value="1"/>
</dbReference>
<dbReference type="InterPro" id="IPR001911">
    <property type="entry name" value="Ribosomal_bS21"/>
</dbReference>
<dbReference type="InterPro" id="IPR018278">
    <property type="entry name" value="Ribosomal_bS21_CS"/>
</dbReference>
<dbReference type="InterPro" id="IPR038380">
    <property type="entry name" value="Ribosomal_bS21_sf"/>
</dbReference>
<dbReference type="NCBIfam" id="TIGR00030">
    <property type="entry name" value="S21p"/>
    <property type="match status" value="1"/>
</dbReference>
<dbReference type="PANTHER" id="PTHR21109">
    <property type="entry name" value="MITOCHONDRIAL 28S RIBOSOMAL PROTEIN S21"/>
    <property type="match status" value="1"/>
</dbReference>
<dbReference type="PANTHER" id="PTHR21109:SF22">
    <property type="entry name" value="SMALL RIBOSOMAL SUBUNIT PROTEIN BS21"/>
    <property type="match status" value="1"/>
</dbReference>
<dbReference type="Pfam" id="PF01165">
    <property type="entry name" value="Ribosomal_S21"/>
    <property type="match status" value="1"/>
</dbReference>
<dbReference type="PRINTS" id="PR00976">
    <property type="entry name" value="RIBOSOMALS21"/>
</dbReference>
<dbReference type="PROSITE" id="PS01181">
    <property type="entry name" value="RIBOSOMAL_S21"/>
    <property type="match status" value="1"/>
</dbReference>
<proteinExistence type="inferred from homology"/>
<accession>A5F9E6</accession>
<accession>C3LX46</accession>
<reference key="1">
    <citation type="submission" date="2007-03" db="EMBL/GenBank/DDBJ databases">
        <authorList>
            <person name="Heidelberg J."/>
        </authorList>
    </citation>
    <scope>NUCLEOTIDE SEQUENCE [LARGE SCALE GENOMIC DNA]</scope>
    <source>
        <strain>ATCC 39541 / Classical Ogawa 395 / O395</strain>
    </source>
</reference>
<reference key="2">
    <citation type="journal article" date="2008" name="PLoS ONE">
        <title>A recalibrated molecular clock and independent origins for the cholera pandemic clones.</title>
        <authorList>
            <person name="Feng L."/>
            <person name="Reeves P.R."/>
            <person name="Lan R."/>
            <person name="Ren Y."/>
            <person name="Gao C."/>
            <person name="Zhou Z."/>
            <person name="Ren Y."/>
            <person name="Cheng J."/>
            <person name="Wang W."/>
            <person name="Wang J."/>
            <person name="Qian W."/>
            <person name="Li D."/>
            <person name="Wang L."/>
        </authorList>
    </citation>
    <scope>NUCLEOTIDE SEQUENCE [LARGE SCALE GENOMIC DNA]</scope>
    <source>
        <strain>ATCC 39541 / Classical Ogawa 395 / O395</strain>
    </source>
</reference>